<gene>
    <name evidence="1" type="primary">ureA</name>
    <name type="ordered locus">Hac_1532</name>
</gene>
<accession>Q17VS7</accession>
<sequence>MKLTPKELDKLMLHYAGELAKKRKERGIKLNYVEAVALISAHVMEEARAGKKSAAELMQEGRTLLKPDDVMDGVASMIHEVGIEAMFPDGTKLVTVHTPIESKGKLVPGELFLKNEDITINEGKQAISVKVKNVGDRPVQIGSHFHFFEVNRCLDFDREKAFGKRLDIASGTAVRFEPGEEKSVELIDIGGNRRIFGFNALVDRQADNESKKIALHRAKERGFHGAKSDDNYVKTIKE</sequence>
<name>URE23_HELAH</name>
<feature type="chain" id="PRO_1000070784" description="Urease subunit alpha">
    <location>
        <begin position="1"/>
        <end position="238"/>
    </location>
</feature>
<feature type="region of interest" description="Urease gamma">
    <location>
        <begin position="1"/>
        <end position="102"/>
    </location>
</feature>
<feature type="region of interest" description="Urease beta">
    <location>
        <begin position="103"/>
        <end position="238"/>
    </location>
</feature>
<keyword id="KW-0963">Cytoplasm</keyword>
<keyword id="KW-0378">Hydrolase</keyword>
<comment type="catalytic activity">
    <reaction evidence="1">
        <text>urea + 2 H2O + H(+) = hydrogencarbonate + 2 NH4(+)</text>
        <dbReference type="Rhea" id="RHEA:20557"/>
        <dbReference type="ChEBI" id="CHEBI:15377"/>
        <dbReference type="ChEBI" id="CHEBI:15378"/>
        <dbReference type="ChEBI" id="CHEBI:16199"/>
        <dbReference type="ChEBI" id="CHEBI:17544"/>
        <dbReference type="ChEBI" id="CHEBI:28938"/>
        <dbReference type="EC" id="3.5.1.5"/>
    </reaction>
</comment>
<comment type="pathway">
    <text evidence="1">Nitrogen metabolism; urea degradation; CO(2) and NH(3) from urea (urease route): step 1/1.</text>
</comment>
<comment type="subunit">
    <text evidence="1">Heterohexamer of 3 UreA (alpha) and 3 UreB (beta) subunits.</text>
</comment>
<comment type="subcellular location">
    <subcellularLocation>
        <location evidence="1">Cytoplasm</location>
    </subcellularLocation>
</comment>
<comment type="similarity">
    <text evidence="1">In the N-terminal section; belongs to the urease gamma subunit family.</text>
</comment>
<comment type="similarity">
    <text evidence="1">In the C-terminal section; belongs to the urease beta subunit family.</text>
</comment>
<comment type="caution">
    <text evidence="2">The orthologous protein is known as the gamma/beta subunit (UreAB) in most other bacteria.</text>
</comment>
<dbReference type="EC" id="3.5.1.5" evidence="1"/>
<dbReference type="EMBL" id="AM260522">
    <property type="protein sequence ID" value="CAK00249.1"/>
    <property type="molecule type" value="Genomic_DNA"/>
</dbReference>
<dbReference type="RefSeq" id="WP_011578335.1">
    <property type="nucleotide sequence ID" value="NC_008229.1"/>
</dbReference>
<dbReference type="SMR" id="Q17VS7"/>
<dbReference type="STRING" id="382638.Hac_1532"/>
<dbReference type="GeneID" id="31758800"/>
<dbReference type="KEGG" id="hac:Hac_1532"/>
<dbReference type="eggNOG" id="COG0831">
    <property type="taxonomic scope" value="Bacteria"/>
</dbReference>
<dbReference type="eggNOG" id="COG0832">
    <property type="taxonomic scope" value="Bacteria"/>
</dbReference>
<dbReference type="HOGENOM" id="CLU_000980_3_0_7"/>
<dbReference type="OrthoDB" id="9797217at2"/>
<dbReference type="BioCyc" id="HACI382638:HAC_RS06495-MONOMER"/>
<dbReference type="UniPathway" id="UPA00258">
    <property type="reaction ID" value="UER00370"/>
</dbReference>
<dbReference type="Proteomes" id="UP000000775">
    <property type="component" value="Chromosome"/>
</dbReference>
<dbReference type="GO" id="GO:0035550">
    <property type="term" value="C:urease complex"/>
    <property type="evidence" value="ECO:0007669"/>
    <property type="project" value="InterPro"/>
</dbReference>
<dbReference type="GO" id="GO:0016151">
    <property type="term" value="F:nickel cation binding"/>
    <property type="evidence" value="ECO:0007669"/>
    <property type="project" value="InterPro"/>
</dbReference>
<dbReference type="GO" id="GO:0009039">
    <property type="term" value="F:urease activity"/>
    <property type="evidence" value="ECO:0007669"/>
    <property type="project" value="UniProtKB-UniRule"/>
</dbReference>
<dbReference type="GO" id="GO:0043419">
    <property type="term" value="P:urea catabolic process"/>
    <property type="evidence" value="ECO:0007669"/>
    <property type="project" value="UniProtKB-UniRule"/>
</dbReference>
<dbReference type="CDD" id="cd00407">
    <property type="entry name" value="Urease_beta"/>
    <property type="match status" value="1"/>
</dbReference>
<dbReference type="CDD" id="cd00390">
    <property type="entry name" value="Urease_gamma"/>
    <property type="match status" value="1"/>
</dbReference>
<dbReference type="FunFam" id="3.30.280.10:FF:000001">
    <property type="entry name" value="Urease subunit alpha"/>
    <property type="match status" value="1"/>
</dbReference>
<dbReference type="FunFam" id="2.10.150.10:FF:000001">
    <property type="entry name" value="Urease subunit beta"/>
    <property type="match status" value="1"/>
</dbReference>
<dbReference type="Gene3D" id="2.10.150.10">
    <property type="entry name" value="Urease, beta subunit"/>
    <property type="match status" value="1"/>
</dbReference>
<dbReference type="Gene3D" id="3.30.280.10">
    <property type="entry name" value="Urease, gamma-like subunit"/>
    <property type="match status" value="1"/>
</dbReference>
<dbReference type="HAMAP" id="MF_01954">
    <property type="entry name" value="Urease_beta"/>
    <property type="match status" value="1"/>
</dbReference>
<dbReference type="HAMAP" id="MF_01955">
    <property type="entry name" value="Urease_beta_gamma"/>
    <property type="match status" value="1"/>
</dbReference>
<dbReference type="InterPro" id="IPR002019">
    <property type="entry name" value="Urease_beta-like"/>
</dbReference>
<dbReference type="InterPro" id="IPR036461">
    <property type="entry name" value="Urease_betasu_sf"/>
</dbReference>
<dbReference type="InterPro" id="IPR008223">
    <property type="entry name" value="Urease_gamma-beta_su"/>
</dbReference>
<dbReference type="InterPro" id="IPR002026">
    <property type="entry name" value="Urease_gamma/gamma-beta_su"/>
</dbReference>
<dbReference type="InterPro" id="IPR036463">
    <property type="entry name" value="Urease_gamma_sf"/>
</dbReference>
<dbReference type="InterPro" id="IPR050069">
    <property type="entry name" value="Urease_subunit"/>
</dbReference>
<dbReference type="NCBIfam" id="NF009671">
    <property type="entry name" value="PRK13192.1"/>
    <property type="match status" value="1"/>
</dbReference>
<dbReference type="NCBIfam" id="NF009682">
    <property type="entry name" value="PRK13203.1"/>
    <property type="match status" value="1"/>
</dbReference>
<dbReference type="NCBIfam" id="NF009712">
    <property type="entry name" value="PRK13241.1"/>
    <property type="match status" value="1"/>
</dbReference>
<dbReference type="NCBIfam" id="NF010592">
    <property type="entry name" value="PRK13986.1"/>
    <property type="match status" value="1"/>
</dbReference>
<dbReference type="NCBIfam" id="TIGR00192">
    <property type="entry name" value="urease_beta"/>
    <property type="match status" value="1"/>
</dbReference>
<dbReference type="NCBIfam" id="TIGR00193">
    <property type="entry name" value="urease_gam"/>
    <property type="match status" value="1"/>
</dbReference>
<dbReference type="PANTHER" id="PTHR33569">
    <property type="entry name" value="UREASE"/>
    <property type="match status" value="1"/>
</dbReference>
<dbReference type="PANTHER" id="PTHR33569:SF1">
    <property type="entry name" value="UREASE"/>
    <property type="match status" value="1"/>
</dbReference>
<dbReference type="Pfam" id="PF00699">
    <property type="entry name" value="Urease_beta"/>
    <property type="match status" value="1"/>
</dbReference>
<dbReference type="Pfam" id="PF00547">
    <property type="entry name" value="Urease_gamma"/>
    <property type="match status" value="1"/>
</dbReference>
<dbReference type="PIRSF" id="PIRSF001225">
    <property type="entry name" value="Urease_gammabeta"/>
    <property type="match status" value="1"/>
</dbReference>
<dbReference type="SUPFAM" id="SSF51278">
    <property type="entry name" value="Urease, beta-subunit"/>
    <property type="match status" value="1"/>
</dbReference>
<dbReference type="SUPFAM" id="SSF54111">
    <property type="entry name" value="Urease, gamma-subunit"/>
    <property type="match status" value="1"/>
</dbReference>
<organism>
    <name type="scientific">Helicobacter acinonychis (strain Sheeba)</name>
    <dbReference type="NCBI Taxonomy" id="382638"/>
    <lineage>
        <taxon>Bacteria</taxon>
        <taxon>Pseudomonadati</taxon>
        <taxon>Campylobacterota</taxon>
        <taxon>Epsilonproteobacteria</taxon>
        <taxon>Campylobacterales</taxon>
        <taxon>Helicobacteraceae</taxon>
        <taxon>Helicobacter</taxon>
    </lineage>
</organism>
<reference key="1">
    <citation type="journal article" date="2006" name="PLoS Genet.">
        <title>Who ate whom? Adaptive Helicobacter genomic changes that accompanied a host jump from early humans to large felines.</title>
        <authorList>
            <person name="Eppinger M."/>
            <person name="Baar C."/>
            <person name="Linz B."/>
            <person name="Raddatz G."/>
            <person name="Lanz C."/>
            <person name="Keller H."/>
            <person name="Morelli G."/>
            <person name="Gressmann H."/>
            <person name="Achtman M."/>
            <person name="Schuster S.C."/>
        </authorList>
    </citation>
    <scope>NUCLEOTIDE SEQUENCE [LARGE SCALE GENOMIC DNA]</scope>
    <source>
        <strain>Sheeba</strain>
    </source>
</reference>
<evidence type="ECO:0000255" key="1">
    <source>
        <dbReference type="HAMAP-Rule" id="MF_01955"/>
    </source>
</evidence>
<evidence type="ECO:0000305" key="2"/>
<proteinExistence type="inferred from homology"/>
<protein>
    <recommendedName>
        <fullName evidence="1">Urease subunit alpha</fullName>
        <ecNumber evidence="1">3.5.1.5</ecNumber>
    </recommendedName>
    <alternativeName>
        <fullName evidence="1">Urea amidohydrolase subunit alpha</fullName>
    </alternativeName>
</protein>